<gene>
    <name type="primary">FBL3</name>
    <name type="ordered locus">At5g01720</name>
    <name type="ORF">F7A7.240</name>
</gene>
<name>FBL3_ARATH</name>
<feature type="chain" id="PRO_0000272247" description="F-box/LRR-repeat protein 3">
    <location>
        <begin position="1"/>
        <end position="665"/>
    </location>
</feature>
<feature type="domain" description="F-box">
    <location>
        <begin position="11"/>
        <end position="60"/>
    </location>
</feature>
<feature type="repeat" description="LRR 1">
    <location>
        <begin position="61"/>
        <end position="81"/>
    </location>
</feature>
<feature type="repeat" description="LRR 2">
    <location>
        <begin position="82"/>
        <end position="108"/>
    </location>
</feature>
<feature type="repeat" description="LRR 3">
    <location>
        <begin position="109"/>
        <end position="134"/>
    </location>
</feature>
<feature type="repeat" description="LRR 4">
    <location>
        <begin position="135"/>
        <end position="159"/>
    </location>
</feature>
<feature type="repeat" description="LRR 5">
    <location>
        <begin position="160"/>
        <end position="185"/>
    </location>
</feature>
<feature type="repeat" description="LRR 6">
    <location>
        <begin position="186"/>
        <end position="211"/>
    </location>
</feature>
<feature type="repeat" description="LRR 7">
    <location>
        <begin position="214"/>
        <end position="235"/>
    </location>
</feature>
<feature type="repeat" description="LRR 8">
    <location>
        <begin position="236"/>
        <end position="261"/>
    </location>
</feature>
<feature type="repeat" description="LRR 9">
    <location>
        <begin position="262"/>
        <end position="287"/>
    </location>
</feature>
<feature type="repeat" description="LRR 10">
    <location>
        <begin position="288"/>
        <end position="312"/>
    </location>
</feature>
<feature type="repeat" description="LRR 11">
    <location>
        <begin position="313"/>
        <end position="338"/>
    </location>
</feature>
<feature type="repeat" description="LRR 12">
    <location>
        <begin position="339"/>
        <end position="364"/>
    </location>
</feature>
<feature type="repeat" description="LRR 13">
    <location>
        <begin position="365"/>
        <end position="390"/>
    </location>
</feature>
<feature type="repeat" description="LRR 14">
    <location>
        <begin position="391"/>
        <end position="416"/>
    </location>
</feature>
<feature type="repeat" description="LRR 15">
    <location>
        <begin position="419"/>
        <end position="440"/>
    </location>
</feature>
<feature type="repeat" description="LRR 16">
    <location>
        <begin position="441"/>
        <end position="466"/>
    </location>
</feature>
<feature type="repeat" description="LRR 17">
    <location>
        <begin position="467"/>
        <end position="492"/>
    </location>
</feature>
<feature type="repeat" description="LRR 18">
    <location>
        <begin position="493"/>
        <end position="517"/>
    </location>
</feature>
<feature type="repeat" description="LRR 19">
    <location>
        <begin position="518"/>
        <end position="543"/>
    </location>
</feature>
<feature type="repeat" description="LRR 20">
    <location>
        <begin position="544"/>
        <end position="569"/>
    </location>
</feature>
<feature type="repeat" description="LRR 21">
    <location>
        <begin position="594"/>
        <end position="619"/>
    </location>
</feature>
<proteinExistence type="evidence at transcript level"/>
<accession>Q8RWU5</accession>
<accession>Q8LCI1</accession>
<accession>Q9M004</accession>
<reference key="1">
    <citation type="journal article" date="2000" name="Nature">
        <title>Sequence and analysis of chromosome 5 of the plant Arabidopsis thaliana.</title>
        <authorList>
            <person name="Tabata S."/>
            <person name="Kaneko T."/>
            <person name="Nakamura Y."/>
            <person name="Kotani H."/>
            <person name="Kato T."/>
            <person name="Asamizu E."/>
            <person name="Miyajima N."/>
            <person name="Sasamoto S."/>
            <person name="Kimura T."/>
            <person name="Hosouchi T."/>
            <person name="Kawashima K."/>
            <person name="Kohara M."/>
            <person name="Matsumoto M."/>
            <person name="Matsuno A."/>
            <person name="Muraki A."/>
            <person name="Nakayama S."/>
            <person name="Nakazaki N."/>
            <person name="Naruo K."/>
            <person name="Okumura S."/>
            <person name="Shinpo S."/>
            <person name="Takeuchi C."/>
            <person name="Wada T."/>
            <person name="Watanabe A."/>
            <person name="Yamada M."/>
            <person name="Yasuda M."/>
            <person name="Sato S."/>
            <person name="de la Bastide M."/>
            <person name="Huang E."/>
            <person name="Spiegel L."/>
            <person name="Gnoj L."/>
            <person name="O'Shaughnessy A."/>
            <person name="Preston R."/>
            <person name="Habermann K."/>
            <person name="Murray J."/>
            <person name="Johnson D."/>
            <person name="Rohlfing T."/>
            <person name="Nelson J."/>
            <person name="Stoneking T."/>
            <person name="Pepin K."/>
            <person name="Spieth J."/>
            <person name="Sekhon M."/>
            <person name="Armstrong J."/>
            <person name="Becker M."/>
            <person name="Belter E."/>
            <person name="Cordum H."/>
            <person name="Cordes M."/>
            <person name="Courtney L."/>
            <person name="Courtney W."/>
            <person name="Dante M."/>
            <person name="Du H."/>
            <person name="Edwards J."/>
            <person name="Fryman J."/>
            <person name="Haakensen B."/>
            <person name="Lamar E."/>
            <person name="Latreille P."/>
            <person name="Leonard S."/>
            <person name="Meyer R."/>
            <person name="Mulvaney E."/>
            <person name="Ozersky P."/>
            <person name="Riley A."/>
            <person name="Strowmatt C."/>
            <person name="Wagner-McPherson C."/>
            <person name="Wollam A."/>
            <person name="Yoakum M."/>
            <person name="Bell M."/>
            <person name="Dedhia N."/>
            <person name="Parnell L."/>
            <person name="Shah R."/>
            <person name="Rodriguez M."/>
            <person name="Hoon See L."/>
            <person name="Vil D."/>
            <person name="Baker J."/>
            <person name="Kirchoff K."/>
            <person name="Toth K."/>
            <person name="King L."/>
            <person name="Bahret A."/>
            <person name="Miller B."/>
            <person name="Marra M.A."/>
            <person name="Martienssen R."/>
            <person name="McCombie W.R."/>
            <person name="Wilson R.K."/>
            <person name="Murphy G."/>
            <person name="Bancroft I."/>
            <person name="Volckaert G."/>
            <person name="Wambutt R."/>
            <person name="Duesterhoeft A."/>
            <person name="Stiekema W."/>
            <person name="Pohl T."/>
            <person name="Entian K.-D."/>
            <person name="Terryn N."/>
            <person name="Hartley N."/>
            <person name="Bent E."/>
            <person name="Johnson S."/>
            <person name="Langham S.-A."/>
            <person name="McCullagh B."/>
            <person name="Robben J."/>
            <person name="Grymonprez B."/>
            <person name="Zimmermann W."/>
            <person name="Ramsperger U."/>
            <person name="Wedler H."/>
            <person name="Balke K."/>
            <person name="Wedler E."/>
            <person name="Peters S."/>
            <person name="van Staveren M."/>
            <person name="Dirkse W."/>
            <person name="Mooijman P."/>
            <person name="Klein Lankhorst R."/>
            <person name="Weitzenegger T."/>
            <person name="Bothe G."/>
            <person name="Rose M."/>
            <person name="Hauf J."/>
            <person name="Berneiser S."/>
            <person name="Hempel S."/>
            <person name="Feldpausch M."/>
            <person name="Lamberth S."/>
            <person name="Villarroel R."/>
            <person name="Gielen J."/>
            <person name="Ardiles W."/>
            <person name="Bents O."/>
            <person name="Lemcke K."/>
            <person name="Kolesov G."/>
            <person name="Mayer K.F.X."/>
            <person name="Rudd S."/>
            <person name="Schoof H."/>
            <person name="Schueller C."/>
            <person name="Zaccaria P."/>
            <person name="Mewes H.-W."/>
            <person name="Bevan M."/>
            <person name="Fransz P.F."/>
        </authorList>
    </citation>
    <scope>NUCLEOTIDE SEQUENCE [LARGE SCALE GENOMIC DNA]</scope>
    <source>
        <strain>cv. Columbia</strain>
    </source>
</reference>
<reference key="2">
    <citation type="journal article" date="2017" name="Plant J.">
        <title>Araport11: a complete reannotation of the Arabidopsis thaliana reference genome.</title>
        <authorList>
            <person name="Cheng C.Y."/>
            <person name="Krishnakumar V."/>
            <person name="Chan A.P."/>
            <person name="Thibaud-Nissen F."/>
            <person name="Schobel S."/>
            <person name="Town C.D."/>
        </authorList>
    </citation>
    <scope>GENOME REANNOTATION</scope>
    <source>
        <strain>cv. Columbia</strain>
    </source>
</reference>
<reference key="3">
    <citation type="journal article" date="2003" name="Science">
        <title>Empirical analysis of transcriptional activity in the Arabidopsis genome.</title>
        <authorList>
            <person name="Yamada K."/>
            <person name="Lim J."/>
            <person name="Dale J.M."/>
            <person name="Chen H."/>
            <person name="Shinn P."/>
            <person name="Palm C.J."/>
            <person name="Southwick A.M."/>
            <person name="Wu H.C."/>
            <person name="Kim C.J."/>
            <person name="Nguyen M."/>
            <person name="Pham P.K."/>
            <person name="Cheuk R.F."/>
            <person name="Karlin-Newmann G."/>
            <person name="Liu S.X."/>
            <person name="Lam B."/>
            <person name="Sakano H."/>
            <person name="Wu T."/>
            <person name="Yu G."/>
            <person name="Miranda M."/>
            <person name="Quach H.L."/>
            <person name="Tripp M."/>
            <person name="Chang C.H."/>
            <person name="Lee J.M."/>
            <person name="Toriumi M.J."/>
            <person name="Chan M.M."/>
            <person name="Tang C.C."/>
            <person name="Onodera C.S."/>
            <person name="Deng J.M."/>
            <person name="Akiyama K."/>
            <person name="Ansari Y."/>
            <person name="Arakawa T."/>
            <person name="Banh J."/>
            <person name="Banno F."/>
            <person name="Bowser L."/>
            <person name="Brooks S.Y."/>
            <person name="Carninci P."/>
            <person name="Chao Q."/>
            <person name="Choy N."/>
            <person name="Enju A."/>
            <person name="Goldsmith A.D."/>
            <person name="Gurjal M."/>
            <person name="Hansen N.F."/>
            <person name="Hayashizaki Y."/>
            <person name="Johnson-Hopson C."/>
            <person name="Hsuan V.W."/>
            <person name="Iida K."/>
            <person name="Karnes M."/>
            <person name="Khan S."/>
            <person name="Koesema E."/>
            <person name="Ishida J."/>
            <person name="Jiang P.X."/>
            <person name="Jones T."/>
            <person name="Kawai J."/>
            <person name="Kamiya A."/>
            <person name="Meyers C."/>
            <person name="Nakajima M."/>
            <person name="Narusaka M."/>
            <person name="Seki M."/>
            <person name="Sakurai T."/>
            <person name="Satou M."/>
            <person name="Tamse R."/>
            <person name="Vaysberg M."/>
            <person name="Wallender E.K."/>
            <person name="Wong C."/>
            <person name="Yamamura Y."/>
            <person name="Yuan S."/>
            <person name="Shinozaki K."/>
            <person name="Davis R.W."/>
            <person name="Theologis A."/>
            <person name="Ecker J.R."/>
        </authorList>
    </citation>
    <scope>NUCLEOTIDE SEQUENCE [LARGE SCALE MRNA]</scope>
    <source>
        <strain>cv. Columbia</strain>
    </source>
</reference>
<reference key="4">
    <citation type="submission" date="2006-07" db="EMBL/GenBank/DDBJ databases">
        <title>Large-scale analysis of RIKEN Arabidopsis full-length (RAFL) cDNAs.</title>
        <authorList>
            <person name="Totoki Y."/>
            <person name="Seki M."/>
            <person name="Ishida J."/>
            <person name="Nakajima M."/>
            <person name="Enju A."/>
            <person name="Kamiya A."/>
            <person name="Narusaka M."/>
            <person name="Shin-i T."/>
            <person name="Nakagawa M."/>
            <person name="Sakamoto N."/>
            <person name="Oishi K."/>
            <person name="Kohara Y."/>
            <person name="Kobayashi M."/>
            <person name="Toyoda A."/>
            <person name="Sakaki Y."/>
            <person name="Sakurai T."/>
            <person name="Iida K."/>
            <person name="Akiyama K."/>
            <person name="Satou M."/>
            <person name="Toyoda T."/>
            <person name="Konagaya A."/>
            <person name="Carninci P."/>
            <person name="Kawai J."/>
            <person name="Hayashizaki Y."/>
            <person name="Shinozaki K."/>
        </authorList>
    </citation>
    <scope>NUCLEOTIDE SEQUENCE [LARGE SCALE MRNA]</scope>
    <source>
        <strain>cv. Columbia</strain>
    </source>
</reference>
<reference key="5">
    <citation type="submission" date="2002-03" db="EMBL/GenBank/DDBJ databases">
        <title>Full-length cDNA from Arabidopsis thaliana.</title>
        <authorList>
            <person name="Brover V.V."/>
            <person name="Troukhan M.E."/>
            <person name="Alexandrov N.A."/>
            <person name="Lu Y.-P."/>
            <person name="Flavell R.B."/>
            <person name="Feldmann K.A."/>
        </authorList>
    </citation>
    <scope>NUCLEOTIDE SEQUENCE [LARGE SCALE MRNA] OF 592-665</scope>
</reference>
<reference key="6">
    <citation type="journal article" date="2000" name="Trends Plant Sci.">
        <title>F-box proteins in Arabidopsis.</title>
        <authorList>
            <person name="Xiao W."/>
            <person name="Jang J.-C."/>
        </authorList>
    </citation>
    <scope>GENE FAMILY</scope>
    <scope>NOMENCLATURE</scope>
</reference>
<sequence>MKKVKQIRVLKPFDLLSEELVFIILDLISPNPSDLKSFSLTCKSFYQLESKHRGSLKPLRSDYLPRILTRYRNTTDLDLTFCPRVTDYALSVVGCLSGPTLRSLDLSRSGSFSAAGLLRLALKCVNLVEIDLSNATEMRDADAAVVAEARSLERLKLGRCKMLTDMGIGCIAVGCKKLNTVSLKWCVGVGDLGVGLLAVKCKDIRTLDLSYLPITGKCLHDILKLQHLEELLLEGCFGVDDDSLKSLRHDCKSLKKLDASSCQNLTHRGLTSLLSGAGYLQRLDLSHCSSVISLDFASSLKKVSALQSIRLDGCSVTPDGLKAIGTLCNSLKEVSLSKCVSVTDEGLSSLVMKLKDLRKLDITCCRKLSRVSITQIANSCPLLVSLKMESCSLVSREAFWLIGQKCRLLEELDLTDNEIDDEGLKSISSCLSLSSLKLGICLNITDKGLSYIGMGCSNLRELDLYRSVGITDVGISTIAQGCIHLETINISYCQDITDKSLVSLSKCSLLQTFESRGCPNITSQGLAAIAVRCKRLAKVDLKKCPSINDAGLLALAHFSQNLKQINVSDTAVTEVGLLSLANIGCLQNIAVVNSSGLRPSGVAAALLGCGGLRKAKLHASLRSLLPLSLIHHLEARGCAFLWKDNTLQAELDPKYWKQQLEEMAP</sequence>
<keyword id="KW-0433">Leucine-rich repeat</keyword>
<keyword id="KW-1185">Reference proteome</keyword>
<keyword id="KW-0677">Repeat</keyword>
<organism>
    <name type="scientific">Arabidopsis thaliana</name>
    <name type="common">Mouse-ear cress</name>
    <dbReference type="NCBI Taxonomy" id="3702"/>
    <lineage>
        <taxon>Eukaryota</taxon>
        <taxon>Viridiplantae</taxon>
        <taxon>Streptophyta</taxon>
        <taxon>Embryophyta</taxon>
        <taxon>Tracheophyta</taxon>
        <taxon>Spermatophyta</taxon>
        <taxon>Magnoliopsida</taxon>
        <taxon>eudicotyledons</taxon>
        <taxon>Gunneridae</taxon>
        <taxon>Pentapetalae</taxon>
        <taxon>rosids</taxon>
        <taxon>malvids</taxon>
        <taxon>Brassicales</taxon>
        <taxon>Brassicaceae</taxon>
        <taxon>Camelineae</taxon>
        <taxon>Arabidopsis</taxon>
    </lineage>
</organism>
<protein>
    <recommendedName>
        <fullName>F-box/LRR-repeat protein 3</fullName>
    </recommendedName>
</protein>
<evidence type="ECO:0000305" key="1"/>
<dbReference type="EMBL" id="AL161946">
    <property type="protein sequence ID" value="CAB82288.1"/>
    <property type="status" value="ALT_SEQ"/>
    <property type="molecule type" value="Genomic_DNA"/>
</dbReference>
<dbReference type="EMBL" id="CP002688">
    <property type="protein sequence ID" value="AED90382.1"/>
    <property type="molecule type" value="Genomic_DNA"/>
</dbReference>
<dbReference type="EMBL" id="AY091103">
    <property type="protein sequence ID" value="AAM14053.1"/>
    <property type="molecule type" value="mRNA"/>
</dbReference>
<dbReference type="EMBL" id="AY122938">
    <property type="protein sequence ID" value="AAM67471.1"/>
    <property type="molecule type" value="mRNA"/>
</dbReference>
<dbReference type="EMBL" id="AK229588">
    <property type="protein sequence ID" value="BAF01436.1"/>
    <property type="molecule type" value="mRNA"/>
</dbReference>
<dbReference type="EMBL" id="AY086589">
    <property type="protein sequence ID" value="AAM67364.1"/>
    <property type="molecule type" value="mRNA"/>
</dbReference>
<dbReference type="PIR" id="T48193">
    <property type="entry name" value="T48193"/>
</dbReference>
<dbReference type="RefSeq" id="NP_568094.2">
    <property type="nucleotide sequence ID" value="NM_120250.4"/>
</dbReference>
<dbReference type="FunCoup" id="Q8RWU5">
    <property type="interactions" value="1219"/>
</dbReference>
<dbReference type="STRING" id="3702.Q8RWU5"/>
<dbReference type="PaxDb" id="3702-AT5G01720.1"/>
<dbReference type="EnsemblPlants" id="AT5G01720.1">
    <property type="protein sequence ID" value="AT5G01720.1"/>
    <property type="gene ID" value="AT5G01720"/>
</dbReference>
<dbReference type="GeneID" id="831688"/>
<dbReference type="Gramene" id="AT5G01720.1">
    <property type="protein sequence ID" value="AT5G01720.1"/>
    <property type="gene ID" value="AT5G01720"/>
</dbReference>
<dbReference type="KEGG" id="ath:AT5G01720"/>
<dbReference type="Araport" id="AT5G01720"/>
<dbReference type="TAIR" id="AT5G01720">
    <property type="gene designation" value="RAE1"/>
</dbReference>
<dbReference type="eggNOG" id="KOG1947">
    <property type="taxonomic scope" value="Eukaryota"/>
</dbReference>
<dbReference type="HOGENOM" id="CLU_016072_3_1_1"/>
<dbReference type="InParanoid" id="Q8RWU5"/>
<dbReference type="OMA" id="SINLWYC"/>
<dbReference type="PhylomeDB" id="Q8RWU5"/>
<dbReference type="PRO" id="PR:Q8RWU5"/>
<dbReference type="Proteomes" id="UP000006548">
    <property type="component" value="Chromosome 5"/>
</dbReference>
<dbReference type="ExpressionAtlas" id="Q8RWU5">
    <property type="expression patterns" value="baseline and differential"/>
</dbReference>
<dbReference type="GO" id="GO:0005634">
    <property type="term" value="C:nucleus"/>
    <property type="evidence" value="ECO:0000314"/>
    <property type="project" value="TAIR"/>
</dbReference>
<dbReference type="GO" id="GO:0019005">
    <property type="term" value="C:SCF ubiquitin ligase complex"/>
    <property type="evidence" value="ECO:0000353"/>
    <property type="project" value="TAIR"/>
</dbReference>
<dbReference type="GO" id="GO:0016567">
    <property type="term" value="P:protein ubiquitination"/>
    <property type="evidence" value="ECO:0000315"/>
    <property type="project" value="TAIR"/>
</dbReference>
<dbReference type="GO" id="GO:0006511">
    <property type="term" value="P:ubiquitin-dependent protein catabolic process"/>
    <property type="evidence" value="ECO:0000315"/>
    <property type="project" value="TAIR"/>
</dbReference>
<dbReference type="CDD" id="cd22159">
    <property type="entry name" value="F-box_AtTIR1-like"/>
    <property type="match status" value="1"/>
</dbReference>
<dbReference type="FunFam" id="3.80.10.10:FF:001072">
    <property type="entry name" value="F-box/LRR-repeat protein 3"/>
    <property type="match status" value="1"/>
</dbReference>
<dbReference type="FunFam" id="3.80.10.10:FF:002756">
    <property type="entry name" value="F-box/LRR-repeat protein 3"/>
    <property type="match status" value="1"/>
</dbReference>
<dbReference type="FunFam" id="3.80.10.10:FF:002762">
    <property type="entry name" value="F-box/LRR-repeat protein 3"/>
    <property type="match status" value="1"/>
</dbReference>
<dbReference type="Gene3D" id="3.80.10.10">
    <property type="entry name" value="Ribonuclease Inhibitor"/>
    <property type="match status" value="3"/>
</dbReference>
<dbReference type="InterPro" id="IPR001611">
    <property type="entry name" value="Leu-rich_rpt"/>
</dbReference>
<dbReference type="InterPro" id="IPR006553">
    <property type="entry name" value="Leu-rich_rpt_Cys-con_subtyp"/>
</dbReference>
<dbReference type="InterPro" id="IPR032675">
    <property type="entry name" value="LRR_dom_sf"/>
</dbReference>
<dbReference type="PANTHER" id="PTHR13318:SF105">
    <property type="entry name" value="F-BOX_LRR-REPEAT PROTEIN 3"/>
    <property type="match status" value="1"/>
</dbReference>
<dbReference type="PANTHER" id="PTHR13318">
    <property type="entry name" value="PARTNER OF PAIRED, ISOFORM B-RELATED"/>
    <property type="match status" value="1"/>
</dbReference>
<dbReference type="Pfam" id="PF13516">
    <property type="entry name" value="LRR_6"/>
    <property type="match status" value="3"/>
</dbReference>
<dbReference type="SMART" id="SM00367">
    <property type="entry name" value="LRR_CC"/>
    <property type="match status" value="18"/>
</dbReference>
<dbReference type="SUPFAM" id="SSF52047">
    <property type="entry name" value="RNI-like"/>
    <property type="match status" value="3"/>
</dbReference>
<comment type="sequence caution" evidence="1">
    <conflict type="erroneous gene model prediction">
        <sequence resource="EMBL-CDS" id="CAB82288"/>
    </conflict>
</comment>